<evidence type="ECO:0000250" key="1"/>
<evidence type="ECO:0000250" key="2">
    <source>
        <dbReference type="UniProtKB" id="A6QLP2"/>
    </source>
</evidence>
<evidence type="ECO:0000250" key="3">
    <source>
        <dbReference type="UniProtKB" id="Q68FL4"/>
    </source>
</evidence>
<evidence type="ECO:0000250" key="4">
    <source>
        <dbReference type="UniProtKB" id="Q96HN2"/>
    </source>
</evidence>
<evidence type="ECO:0000256" key="5">
    <source>
        <dbReference type="SAM" id="MobiDB-lite"/>
    </source>
</evidence>
<evidence type="ECO:0000305" key="6"/>
<reference key="1">
    <citation type="submission" date="2004-11" db="EMBL/GenBank/DDBJ databases">
        <authorList>
            <consortium name="The German cDNA consortium"/>
        </authorList>
    </citation>
    <scope>NUCLEOTIDE SEQUENCE [LARGE SCALE MRNA]</scope>
    <source>
        <tissue>Kidney</tissue>
    </source>
</reference>
<accession>Q5R889</accession>
<feature type="chain" id="PRO_0000230302" description="Putative adenosylhomocysteinase 3">
    <location>
        <begin position="1"/>
        <end position="508"/>
    </location>
</feature>
<feature type="region of interest" description="Disordered" evidence="5">
    <location>
        <begin position="24"/>
        <end position="81"/>
    </location>
</feature>
<feature type="compositionally biased region" description="Basic residues" evidence="5">
    <location>
        <begin position="32"/>
        <end position="41"/>
    </location>
</feature>
<feature type="compositionally biased region" description="Low complexity" evidence="5">
    <location>
        <begin position="42"/>
        <end position="61"/>
    </location>
</feature>
<feature type="binding site" evidence="1">
    <location>
        <position position="133"/>
    </location>
    <ligand>
        <name>substrate</name>
    </ligand>
</feature>
<feature type="binding site" evidence="1">
    <location>
        <position position="207"/>
    </location>
    <ligand>
        <name>substrate</name>
    </ligand>
</feature>
<feature type="binding site" evidence="1">
    <location>
        <position position="232"/>
    </location>
    <ligand>
        <name>substrate</name>
    </ligand>
</feature>
<feature type="binding site" evidence="1">
    <location>
        <begin position="233"/>
        <end position="235"/>
    </location>
    <ligand>
        <name>NAD(+)</name>
        <dbReference type="ChEBI" id="CHEBI:57540"/>
    </ligand>
</feature>
<feature type="binding site" evidence="1">
    <location>
        <position position="262"/>
    </location>
    <ligand>
        <name>substrate</name>
    </ligand>
</feature>
<feature type="binding site" evidence="1">
    <location>
        <position position="266"/>
    </location>
    <ligand>
        <name>substrate</name>
    </ligand>
</feature>
<feature type="binding site" evidence="1">
    <location>
        <position position="267"/>
    </location>
    <ligand>
        <name>NAD(+)</name>
        <dbReference type="ChEBI" id="CHEBI:57540"/>
    </ligand>
</feature>
<feature type="binding site" evidence="1">
    <location>
        <begin position="298"/>
        <end position="303"/>
    </location>
    <ligand>
        <name>NAD(+)</name>
        <dbReference type="ChEBI" id="CHEBI:57540"/>
    </ligand>
</feature>
<feature type="binding site" evidence="4">
    <location>
        <position position="319"/>
    </location>
    <ligand>
        <name>NAD(+)</name>
        <dbReference type="ChEBI" id="CHEBI:57540"/>
    </ligand>
</feature>
<feature type="binding site" evidence="4">
    <location>
        <position position="354"/>
    </location>
    <ligand>
        <name>NAD(+)</name>
        <dbReference type="ChEBI" id="CHEBI:57540"/>
    </ligand>
</feature>
<feature type="binding site" evidence="1">
    <location>
        <begin position="375"/>
        <end position="377"/>
    </location>
    <ligand>
        <name>NAD(+)</name>
        <dbReference type="ChEBI" id="CHEBI:57540"/>
    </ligand>
</feature>
<feature type="binding site" evidence="4">
    <location>
        <position position="422"/>
    </location>
    <ligand>
        <name>NAD(+)</name>
        <dbReference type="ChEBI" id="CHEBI:57540"/>
    </ligand>
</feature>
<feature type="modified residue" description="Phosphoserine" evidence="4">
    <location>
        <position position="4"/>
    </location>
</feature>
<feature type="modified residue" description="Phosphoserine" evidence="4">
    <location>
        <position position="46"/>
    </location>
</feature>
<feature type="modified residue" description="Phosphoserine" evidence="4">
    <location>
        <position position="49"/>
    </location>
</feature>
<feature type="modified residue" description="Phosphoserine" evidence="4">
    <location>
        <position position="52"/>
    </location>
</feature>
<feature type="modified residue" description="Phosphoserine" evidence="4">
    <location>
        <position position="55"/>
    </location>
</feature>
<organism>
    <name type="scientific">Pongo abelii</name>
    <name type="common">Sumatran orangutan</name>
    <name type="synonym">Pongo pygmaeus abelii</name>
    <dbReference type="NCBI Taxonomy" id="9601"/>
    <lineage>
        <taxon>Eukaryota</taxon>
        <taxon>Metazoa</taxon>
        <taxon>Chordata</taxon>
        <taxon>Craniata</taxon>
        <taxon>Vertebrata</taxon>
        <taxon>Euteleostomi</taxon>
        <taxon>Mammalia</taxon>
        <taxon>Eutheria</taxon>
        <taxon>Euarchontoglires</taxon>
        <taxon>Primates</taxon>
        <taxon>Haplorrhini</taxon>
        <taxon>Catarrhini</taxon>
        <taxon>Hominidae</taxon>
        <taxon>Pongo</taxon>
    </lineage>
</organism>
<protein>
    <recommendedName>
        <fullName>Putative adenosylhomocysteinase 3</fullName>
        <shortName>AdoHcyase 3</shortName>
        <ecNumber>3.13.2.1</ecNumber>
    </recommendedName>
    <alternativeName>
        <fullName>S-adenosyl-L-homocysteine hydrolase 3</fullName>
    </alternativeName>
    <alternativeName>
        <fullName>S-adenosylhomocysteine hydrolase-like protein 2</fullName>
    </alternativeName>
</protein>
<comment type="function">
    <text evidence="2 4">May regulate the electrogenic sodium/bicarbonate cotransporter SLC4A4 activity and Mg(2+)-sensitivity. On the contrary of its homolog AHCYL1, does not regulate ITPR1 sensitivity to inositol 1,4,5-trisphosphate.</text>
</comment>
<comment type="catalytic activity">
    <reaction>
        <text>S-adenosyl-L-homocysteine + H2O = L-homocysteine + adenosine</text>
        <dbReference type="Rhea" id="RHEA:21708"/>
        <dbReference type="ChEBI" id="CHEBI:15377"/>
        <dbReference type="ChEBI" id="CHEBI:16335"/>
        <dbReference type="ChEBI" id="CHEBI:57856"/>
        <dbReference type="ChEBI" id="CHEBI:58199"/>
        <dbReference type="EC" id="3.13.2.1"/>
    </reaction>
</comment>
<comment type="cofactor">
    <cofactor evidence="1">
        <name>NAD(+)</name>
        <dbReference type="ChEBI" id="CHEBI:57540"/>
    </cofactor>
    <text evidence="1">Binds 1 NAD(+) per subunit.</text>
</comment>
<comment type="pathway">
    <text>Amino-acid biosynthesis; L-homocysteine biosynthesis; L-homocysteine from S-adenosyl-L-homocysteine: step 1/1.</text>
</comment>
<comment type="subunit">
    <text evidence="2 4">Homotetramer. Forms heteromultimers with AHCYL1 (via the C-terminal region). Interacts with ITPR1; with lower affinity than AHCYL1 and maybe via ITPR1. Interacts with SLC4A4. Interacts with ZCCHC4 (By similarity).</text>
</comment>
<comment type="subcellular location">
    <subcellularLocation>
        <location evidence="2 3">Cytoplasm</location>
    </subcellularLocation>
    <subcellularLocation>
        <location evidence="3">Microsome</location>
    </subcellularLocation>
    <text evidence="3">Associates with membranes when phosphorylated, probably through interaction with ITPR1.</text>
</comment>
<comment type="similarity">
    <text evidence="6">Belongs to the adenosylhomocysteinase family.</text>
</comment>
<sequence length="508" mass="56679">MLGSKKKYIVNGNSGIKAQIQFADQKQEFNKRPTKIGRRSLSRSISQSSTDSYSSAASYTDSSDDETSPRDKQQKNSKGSSDFCVKNIKQAEFGRREIEIAEQEMPALMALRKRAQGEKPLAGAKIVGCTHITAQTAVLMETLGALGAQCRWAACNIYSTLNEVAAALAESGFPVFAWKGESEDDFWWCIDRCVNVEGWQPNMILDDGGDLTHWIYKKYPNMFKKIKGIVEESVTGVHRLYQLSKAGKLCVPAMNVNDSVTKQKFDNLYCCRESILDGLKRTTDMMFGGKQVVVCGYGEVGKGCCAALKAMGSIVYVTEIDPICALQACMDGFRLVKLNEVIRQVDIVITCTGNKNVVTREHLDRMKNSCIVCNIGHSNTEIDVASLRTPELTWERVRSQVDHVIWPDGKRIVLLAEGRLLNLSCSTVPTFVLSITATTQALALIELYNAPEGRYKQDVYLLPKKMDEYVASLHLPTFDAHLTELTDEQAKYLGLNKNGPFKPNYYRY</sequence>
<gene>
    <name type="primary">AHCYL2</name>
</gene>
<proteinExistence type="evidence at transcript level"/>
<keyword id="KW-0963">Cytoplasm</keyword>
<keyword id="KW-0256">Endoplasmic reticulum</keyword>
<keyword id="KW-0378">Hydrolase</keyword>
<keyword id="KW-0492">Microsome</keyword>
<keyword id="KW-0520">NAD</keyword>
<keyword id="KW-0554">One-carbon metabolism</keyword>
<keyword id="KW-0597">Phosphoprotein</keyword>
<keyword id="KW-1185">Reference proteome</keyword>
<dbReference type="EC" id="3.13.2.1"/>
<dbReference type="EMBL" id="CR859865">
    <property type="protein sequence ID" value="CAH92021.1"/>
    <property type="molecule type" value="mRNA"/>
</dbReference>
<dbReference type="RefSeq" id="NP_001126174.1">
    <property type="nucleotide sequence ID" value="NM_001132702.1"/>
</dbReference>
<dbReference type="SMR" id="Q5R889"/>
<dbReference type="STRING" id="9601.ENSPPYP00000020187"/>
<dbReference type="GeneID" id="100173136"/>
<dbReference type="KEGG" id="pon:100173136"/>
<dbReference type="CTD" id="23382"/>
<dbReference type="eggNOG" id="KOG1370">
    <property type="taxonomic scope" value="Eukaryota"/>
</dbReference>
<dbReference type="InParanoid" id="Q5R889"/>
<dbReference type="OrthoDB" id="10007170at2759"/>
<dbReference type="UniPathway" id="UPA00314">
    <property type="reaction ID" value="UER00076"/>
</dbReference>
<dbReference type="Proteomes" id="UP000001595">
    <property type="component" value="Unplaced"/>
</dbReference>
<dbReference type="GO" id="GO:0005829">
    <property type="term" value="C:cytosol"/>
    <property type="evidence" value="ECO:0007669"/>
    <property type="project" value="TreeGrafter"/>
</dbReference>
<dbReference type="GO" id="GO:0005783">
    <property type="term" value="C:endoplasmic reticulum"/>
    <property type="evidence" value="ECO:0007669"/>
    <property type="project" value="UniProtKB-KW"/>
</dbReference>
<dbReference type="GO" id="GO:0004013">
    <property type="term" value="F:adenosylhomocysteinase activity"/>
    <property type="evidence" value="ECO:0007669"/>
    <property type="project" value="RHEA"/>
</dbReference>
<dbReference type="GO" id="GO:0006730">
    <property type="term" value="P:one-carbon metabolic process"/>
    <property type="evidence" value="ECO:0007669"/>
    <property type="project" value="UniProtKB-KW"/>
</dbReference>
<dbReference type="GO" id="GO:0033353">
    <property type="term" value="P:S-adenosylmethionine cycle"/>
    <property type="evidence" value="ECO:0007669"/>
    <property type="project" value="TreeGrafter"/>
</dbReference>
<dbReference type="CDD" id="cd00401">
    <property type="entry name" value="SAHH"/>
    <property type="match status" value="1"/>
</dbReference>
<dbReference type="FunFam" id="3.40.50.1480:FF:000002">
    <property type="entry name" value="Adenosylhomocysteinase"/>
    <property type="match status" value="1"/>
</dbReference>
<dbReference type="FunFam" id="3.40.50.1480:FF:000007">
    <property type="entry name" value="Adenosylhomocysteinase"/>
    <property type="match status" value="1"/>
</dbReference>
<dbReference type="FunFam" id="3.40.50.720:FF:000035">
    <property type="entry name" value="Adenosylhomocysteinase"/>
    <property type="match status" value="1"/>
</dbReference>
<dbReference type="FunFam" id="3.40.50.1480:FF:000009">
    <property type="entry name" value="Adenosylhomocysteinase like 2"/>
    <property type="match status" value="1"/>
</dbReference>
<dbReference type="Gene3D" id="3.40.50.1480">
    <property type="entry name" value="Adenosylhomocysteinase-like"/>
    <property type="match status" value="3"/>
</dbReference>
<dbReference type="Gene3D" id="3.40.50.720">
    <property type="entry name" value="NAD(P)-binding Rossmann-like Domain"/>
    <property type="match status" value="1"/>
</dbReference>
<dbReference type="InterPro" id="IPR042172">
    <property type="entry name" value="Adenosylhomocyst_ase-like_sf"/>
</dbReference>
<dbReference type="InterPro" id="IPR000043">
    <property type="entry name" value="Adenosylhomocysteinase-like"/>
</dbReference>
<dbReference type="InterPro" id="IPR015878">
    <property type="entry name" value="Ado_hCys_hydrolase_NAD-bd"/>
</dbReference>
<dbReference type="InterPro" id="IPR036291">
    <property type="entry name" value="NAD(P)-bd_dom_sf"/>
</dbReference>
<dbReference type="InterPro" id="IPR020082">
    <property type="entry name" value="S-Ado-L-homoCys_hydrolase_CS"/>
</dbReference>
<dbReference type="NCBIfam" id="TIGR00936">
    <property type="entry name" value="ahcY"/>
    <property type="match status" value="1"/>
</dbReference>
<dbReference type="NCBIfam" id="NF004005">
    <property type="entry name" value="PRK05476.2-3"/>
    <property type="match status" value="1"/>
</dbReference>
<dbReference type="PANTHER" id="PTHR23420">
    <property type="entry name" value="ADENOSYLHOMOCYSTEINASE"/>
    <property type="match status" value="1"/>
</dbReference>
<dbReference type="PANTHER" id="PTHR23420:SF2">
    <property type="entry name" value="ADENOSYLHOMOCYSTEINASE 3"/>
    <property type="match status" value="1"/>
</dbReference>
<dbReference type="Pfam" id="PF05221">
    <property type="entry name" value="AdoHcyase"/>
    <property type="match status" value="1"/>
</dbReference>
<dbReference type="Pfam" id="PF00670">
    <property type="entry name" value="AdoHcyase_NAD"/>
    <property type="match status" value="1"/>
</dbReference>
<dbReference type="PIRSF" id="PIRSF001109">
    <property type="entry name" value="Ad_hcy_hydrolase"/>
    <property type="match status" value="1"/>
</dbReference>
<dbReference type="SMART" id="SM00996">
    <property type="entry name" value="AdoHcyase"/>
    <property type="match status" value="1"/>
</dbReference>
<dbReference type="SMART" id="SM00997">
    <property type="entry name" value="AdoHcyase_NAD"/>
    <property type="match status" value="1"/>
</dbReference>
<dbReference type="SUPFAM" id="SSF52283">
    <property type="entry name" value="Formate/glycerate dehydrogenase catalytic domain-like"/>
    <property type="match status" value="1"/>
</dbReference>
<dbReference type="SUPFAM" id="SSF51735">
    <property type="entry name" value="NAD(P)-binding Rossmann-fold domains"/>
    <property type="match status" value="1"/>
</dbReference>
<dbReference type="PROSITE" id="PS00738">
    <property type="entry name" value="ADOHCYASE_1"/>
    <property type="match status" value="1"/>
</dbReference>
<dbReference type="PROSITE" id="PS00739">
    <property type="entry name" value="ADOHCYASE_2"/>
    <property type="match status" value="1"/>
</dbReference>
<name>SAHH3_PONAB</name>